<gene>
    <name evidence="1" type="primary">pfp</name>
    <name type="ordered locus">TP_0542</name>
    <name type="ORF">TPANIC_0542</name>
</gene>
<name>PFP_TREPA</name>
<accession>O83553</accession>
<organism>
    <name type="scientific">Treponema pallidum (strain Nichols)</name>
    <dbReference type="NCBI Taxonomy" id="243276"/>
    <lineage>
        <taxon>Bacteria</taxon>
        <taxon>Pseudomonadati</taxon>
        <taxon>Spirochaetota</taxon>
        <taxon>Spirochaetia</taxon>
        <taxon>Spirochaetales</taxon>
        <taxon>Treponemataceae</taxon>
        <taxon>Treponema</taxon>
    </lineage>
</organism>
<feature type="chain" id="PRO_0000429711" description="Pyrophosphate--fructose 6-phosphate 1-phosphotransferase">
    <location>
        <begin position="1"/>
        <end position="573"/>
    </location>
</feature>
<feature type="active site" description="Proton acceptor" evidence="1">
    <location>
        <position position="214"/>
    </location>
</feature>
<feature type="binding site" evidence="1">
    <location>
        <position position="90"/>
    </location>
    <ligand>
        <name>diphosphate</name>
        <dbReference type="ChEBI" id="CHEBI:33019"/>
    </ligand>
</feature>
<feature type="binding site" evidence="1">
    <location>
        <position position="184"/>
    </location>
    <ligand>
        <name>Mg(2+)</name>
        <dbReference type="ChEBI" id="CHEBI:18420"/>
        <note>catalytic</note>
    </ligand>
</feature>
<feature type="binding site" description="in other chain" evidence="1">
    <location>
        <begin position="212"/>
        <end position="214"/>
    </location>
    <ligand>
        <name>substrate</name>
        <note>ligand shared between dimeric partners</note>
    </ligand>
</feature>
<feature type="binding site" evidence="1">
    <location>
        <begin position="251"/>
        <end position="252"/>
    </location>
    <ligand>
        <name>substrate</name>
        <note>ligand shared between dimeric partners</note>
    </ligand>
</feature>
<feature type="binding site" description="in other chain" evidence="1">
    <location>
        <begin position="259"/>
        <end position="261"/>
    </location>
    <ligand>
        <name>substrate</name>
        <note>ligand shared between dimeric partners</note>
    </ligand>
</feature>
<feature type="binding site" description="in other chain" evidence="1">
    <location>
        <position position="320"/>
    </location>
    <ligand>
        <name>substrate</name>
        <note>ligand shared between dimeric partners</note>
    </ligand>
</feature>
<feature type="binding site" description="in other chain" evidence="1">
    <location>
        <begin position="434"/>
        <end position="437"/>
    </location>
    <ligand>
        <name>substrate</name>
        <note>ligand shared between dimeric partners</note>
    </ligand>
</feature>
<feature type="site" description="Important for catalytic activity and substrate specificity; stabilizes the transition state when the phosphoryl donor is PPi; prevents ATP from binding by mimicking the alpha-phosphate group of ATP" evidence="1">
    <location>
        <position position="185"/>
    </location>
</feature>
<feature type="site" description="Important for catalytic activity; stabilizes the transition state when the phosphoryl donor is PPi" evidence="1">
    <location>
        <position position="211"/>
    </location>
</feature>
<dbReference type="EC" id="2.7.1.90" evidence="1"/>
<dbReference type="EMBL" id="AE000520">
    <property type="protein sequence ID" value="AAC65526.1"/>
    <property type="molecule type" value="Genomic_DNA"/>
</dbReference>
<dbReference type="EMBL" id="CP004010">
    <property type="protein sequence ID" value="AGN75729.1"/>
    <property type="molecule type" value="Genomic_DNA"/>
</dbReference>
<dbReference type="PIR" id="C71312">
    <property type="entry name" value="C71312"/>
</dbReference>
<dbReference type="RefSeq" id="WP_010881989.1">
    <property type="nucleotide sequence ID" value="NC_021490.2"/>
</dbReference>
<dbReference type="SMR" id="O83553"/>
<dbReference type="IntAct" id="O83553">
    <property type="interactions" value="3"/>
</dbReference>
<dbReference type="STRING" id="243276.TP_0542"/>
<dbReference type="EnsemblBacteria" id="AAC65526">
    <property type="protein sequence ID" value="AAC65526"/>
    <property type="gene ID" value="TP_0542"/>
</dbReference>
<dbReference type="GeneID" id="93876311"/>
<dbReference type="KEGG" id="tpa:TP_0542"/>
<dbReference type="KEGG" id="tpw:TPANIC_0542"/>
<dbReference type="PATRIC" id="fig|243276.9.peg.538"/>
<dbReference type="eggNOG" id="COG0205">
    <property type="taxonomic scope" value="Bacteria"/>
</dbReference>
<dbReference type="HOGENOM" id="CLU_022288_0_1_12"/>
<dbReference type="OrthoDB" id="9802503at2"/>
<dbReference type="UniPathway" id="UPA00109">
    <property type="reaction ID" value="UER00182"/>
</dbReference>
<dbReference type="Proteomes" id="UP000000811">
    <property type="component" value="Chromosome"/>
</dbReference>
<dbReference type="GO" id="GO:0005829">
    <property type="term" value="C:cytosol"/>
    <property type="evidence" value="ECO:0007669"/>
    <property type="project" value="TreeGrafter"/>
</dbReference>
<dbReference type="GO" id="GO:0003872">
    <property type="term" value="F:6-phosphofructokinase activity"/>
    <property type="evidence" value="ECO:0007669"/>
    <property type="project" value="UniProtKB-UniRule"/>
</dbReference>
<dbReference type="GO" id="GO:0005524">
    <property type="term" value="F:ATP binding"/>
    <property type="evidence" value="ECO:0007669"/>
    <property type="project" value="InterPro"/>
</dbReference>
<dbReference type="GO" id="GO:0047334">
    <property type="term" value="F:diphosphate-fructose-6-phosphate 1-phosphotransferase activity"/>
    <property type="evidence" value="ECO:0007669"/>
    <property type="project" value="UniProtKB-EC"/>
</dbReference>
<dbReference type="GO" id="GO:0046872">
    <property type="term" value="F:metal ion binding"/>
    <property type="evidence" value="ECO:0007669"/>
    <property type="project" value="UniProtKB-KW"/>
</dbReference>
<dbReference type="GO" id="GO:0006002">
    <property type="term" value="P:fructose 6-phosphate metabolic process"/>
    <property type="evidence" value="ECO:0007669"/>
    <property type="project" value="InterPro"/>
</dbReference>
<dbReference type="GO" id="GO:0009749">
    <property type="term" value="P:response to glucose"/>
    <property type="evidence" value="ECO:0007669"/>
    <property type="project" value="TreeGrafter"/>
</dbReference>
<dbReference type="CDD" id="cd00765">
    <property type="entry name" value="Pyrophosphate_PFK"/>
    <property type="match status" value="1"/>
</dbReference>
<dbReference type="Gene3D" id="3.40.50.450">
    <property type="match status" value="1"/>
</dbReference>
<dbReference type="Gene3D" id="3.40.50.460">
    <property type="entry name" value="Phosphofructokinase domain"/>
    <property type="match status" value="1"/>
</dbReference>
<dbReference type="Gene3D" id="1.10.10.480">
    <property type="entry name" value="Phosphofructokinase, domain 3"/>
    <property type="match status" value="1"/>
</dbReference>
<dbReference type="HAMAP" id="MF_01980">
    <property type="entry name" value="Phosphofructokinase_II_Long"/>
    <property type="match status" value="1"/>
</dbReference>
<dbReference type="InterPro" id="IPR022953">
    <property type="entry name" value="ATP_PFK"/>
</dbReference>
<dbReference type="InterPro" id="IPR011183">
    <property type="entry name" value="PfpB_PPi_PFK"/>
</dbReference>
<dbReference type="InterPro" id="IPR000023">
    <property type="entry name" value="Phosphofructokinase_dom"/>
</dbReference>
<dbReference type="InterPro" id="IPR035966">
    <property type="entry name" value="PKF_sf"/>
</dbReference>
<dbReference type="NCBIfam" id="TIGR02477">
    <property type="entry name" value="PFKA_PPi"/>
    <property type="match status" value="1"/>
</dbReference>
<dbReference type="NCBIfam" id="NF005482">
    <property type="entry name" value="PRK07085.1"/>
    <property type="match status" value="1"/>
</dbReference>
<dbReference type="PANTHER" id="PTHR43650">
    <property type="entry name" value="PYROPHOSPHATE--FRUCTOSE 6-PHOSPHATE 1-PHOSPHOTRANSFERASE"/>
    <property type="match status" value="1"/>
</dbReference>
<dbReference type="PANTHER" id="PTHR43650:SF1">
    <property type="entry name" value="PYROPHOSPHATE--FRUCTOSE 6-PHOSPHATE 1-PHOSPHOTRANSFERASE SUBUNIT BETA 2"/>
    <property type="match status" value="1"/>
</dbReference>
<dbReference type="Pfam" id="PF00365">
    <property type="entry name" value="PFK"/>
    <property type="match status" value="1"/>
</dbReference>
<dbReference type="PIRSF" id="PIRSF005677">
    <property type="entry name" value="PPi_PFK_PfpB"/>
    <property type="match status" value="1"/>
</dbReference>
<dbReference type="PRINTS" id="PR00476">
    <property type="entry name" value="PHFRCTKINASE"/>
</dbReference>
<dbReference type="SUPFAM" id="SSF53784">
    <property type="entry name" value="Phosphofructokinase"/>
    <property type="match status" value="1"/>
</dbReference>
<proteinExistence type="evidence at protein level"/>
<reference key="1">
    <citation type="journal article" date="1998" name="Science">
        <title>Complete genome sequence of Treponema pallidum, the syphilis spirochete.</title>
        <authorList>
            <person name="Fraser C.M."/>
            <person name="Norris S.J."/>
            <person name="Weinstock G.M."/>
            <person name="White O."/>
            <person name="Sutton G.G."/>
            <person name="Dodson R.J."/>
            <person name="Gwinn M.L."/>
            <person name="Hickey E.K."/>
            <person name="Clayton R.A."/>
            <person name="Ketchum K.A."/>
            <person name="Sodergren E."/>
            <person name="Hardham J.M."/>
            <person name="McLeod M.P."/>
            <person name="Salzberg S.L."/>
            <person name="Peterson J.D."/>
            <person name="Khalak H.G."/>
            <person name="Richardson D.L."/>
            <person name="Howell J.K."/>
            <person name="Chidambaram M."/>
            <person name="Utterback T.R."/>
            <person name="McDonald L.A."/>
            <person name="Artiach P."/>
            <person name="Bowman C."/>
            <person name="Cotton M.D."/>
            <person name="Fujii C."/>
            <person name="Garland S.A."/>
            <person name="Hatch B."/>
            <person name="Horst K."/>
            <person name="Roberts K.M."/>
            <person name="Sandusky M."/>
            <person name="Weidman J.F."/>
            <person name="Smith H.O."/>
            <person name="Venter J.C."/>
        </authorList>
    </citation>
    <scope>NUCLEOTIDE SEQUENCE [LARGE SCALE GENOMIC DNA]</scope>
    <source>
        <strain>Nichols</strain>
    </source>
</reference>
<reference key="2">
    <citation type="journal article" date="2013" name="PLoS ONE">
        <title>Resequencing of Treponema pallidum ssp. pallidum strains Nichols and SS14: correction of sequencing errors resulted in increased separation of syphilis treponeme subclusters.</title>
        <authorList>
            <person name="Petrosova H."/>
            <person name="Pospisilova P."/>
            <person name="Strouhal M."/>
            <person name="Cejkova D."/>
            <person name="Zobanikova M."/>
            <person name="Mikalova L."/>
            <person name="Sodergren E."/>
            <person name="Weinstock G.M."/>
            <person name="Smajs D."/>
        </authorList>
    </citation>
    <scope>NUCLEOTIDE SEQUENCE [LARGE SCALE GENOMIC DNA]</scope>
    <source>
        <strain>Nichols</strain>
    </source>
</reference>
<reference key="3">
    <citation type="journal article" date="2001" name="FEMS Microbiol. Lett.">
        <title>Biochemical characterization of an active pyrophosphate-dependent phosphofructokinase from Treponema pallidum.</title>
        <authorList>
            <person name="Roberson R.S."/>
            <person name="Ronimus R.S."/>
            <person name="Gephard S."/>
            <person name="Morgan H.W."/>
        </authorList>
    </citation>
    <scope>FUNCTION</scope>
    <scope>CATALYTIC ACTIVITY</scope>
    <scope>BIOPHYSICOCHEMICAL PROPERTIES</scope>
    <scope>ACTIVITY REGULATION</scope>
    <scope>SUBUNIT</scope>
</reference>
<protein>
    <recommendedName>
        <fullName evidence="1">Pyrophosphate--fructose 6-phosphate 1-phosphotransferase</fullName>
        <ecNumber evidence="1">2.7.1.90</ecNumber>
    </recommendedName>
    <alternativeName>
        <fullName evidence="1">6-phosphofructokinase, pyrophosphate dependent</fullName>
    </alternativeName>
    <alternativeName>
        <fullName evidence="1">PPi-dependent phosphofructokinase</fullName>
        <shortName evidence="1">PPi-PFK</shortName>
    </alternativeName>
    <alternativeName>
        <fullName evidence="1">Pyrophosphate-dependent 6-phosphofructose-1-kinase</fullName>
    </alternativeName>
</protein>
<comment type="function">
    <text evidence="1 2">Catalyzes the phosphorylation of D-fructose 6-phosphate, the first committing step of glycolysis. Uses inorganic phosphate (PPi) as phosphoryl donor instead of ATP like common ATP-dependent phosphofructokinases (ATP-PFKs), which renders the reaction reversible, and can thus function both in glycolysis and gluconeogenesis. Consistently, PPi-PFK can replace the enzymes of both the forward (ATP-PFK) and reverse (fructose-bisphosphatase (FBPase)) reactions.</text>
</comment>
<comment type="catalytic activity">
    <reaction evidence="1 2">
        <text>beta-D-fructose 6-phosphate + diphosphate = beta-D-fructose 1,6-bisphosphate + phosphate + H(+)</text>
        <dbReference type="Rhea" id="RHEA:13613"/>
        <dbReference type="ChEBI" id="CHEBI:15378"/>
        <dbReference type="ChEBI" id="CHEBI:32966"/>
        <dbReference type="ChEBI" id="CHEBI:33019"/>
        <dbReference type="ChEBI" id="CHEBI:43474"/>
        <dbReference type="ChEBI" id="CHEBI:57634"/>
        <dbReference type="EC" id="2.7.1.90"/>
    </reaction>
</comment>
<comment type="cofactor">
    <cofactor evidence="1">
        <name>Mg(2+)</name>
        <dbReference type="ChEBI" id="CHEBI:18420"/>
    </cofactor>
</comment>
<comment type="activity regulation">
    <text evidence="1 2">Non-allosteric.</text>
</comment>
<comment type="biophysicochemical properties">
    <kinetics>
        <KM evidence="2">1.39 mM for phosphate</KM>
        <KM evidence="2">0.042 mM for diphosphate</KM>
        <KM evidence="2">0.529 mM for fructose 6-phosphate</KM>
        <KM evidence="2">0.267 mM for fructose 1,6-bisphosphate</KM>
        <Vmax evidence="2">141.0 umol/min/mg enzyme for the forward reaction</Vmax>
        <Vmax evidence="2">42.4 umol/min/mg enzyme for the reverse reaction</Vmax>
    </kinetics>
    <phDependence>
        <text evidence="2">Optimum pH is 8.0 for both the forward and reverse reactions.</text>
    </phDependence>
</comment>
<comment type="pathway">
    <text evidence="1">Carbohydrate degradation; glycolysis; D-glyceraldehyde 3-phosphate and glycerone phosphate from D-glucose: step 3/4.</text>
</comment>
<comment type="subunit">
    <text evidence="1 2">Homodimer.</text>
</comment>
<comment type="subcellular location">
    <subcellularLocation>
        <location evidence="1">Cytoplasm</location>
    </subcellularLocation>
</comment>
<comment type="similarity">
    <text evidence="1">Belongs to the phosphofructokinase type A (PFKA) family. PPi-dependent PFK group II subfamily. Clade 'Long' sub-subfamily.</text>
</comment>
<evidence type="ECO:0000255" key="1">
    <source>
        <dbReference type="HAMAP-Rule" id="MF_01980"/>
    </source>
</evidence>
<evidence type="ECO:0000269" key="2">
    <source>
    </source>
</evidence>
<sequence>MSISLLQQERHRYLPKVPDLLRGDFRRVCARRGLSTTAVADYDALRSLFARTYGQPLVNFVNASEKNEDSPMETAPEPRGLRVAIVLSGGQAPGGHNVIAGLFDGLKRWHADSVLIGFLGGPAGVLSGDHIEICADRVDAYRNTGGFDLIGSGRTKIESESQFAAAAQTVTRMALDALVVVGGDDSNTNAALLAEHFVNSGISTKVIGVPKTIDGDLKNEAIETSFGFDTATKTYSELIGNIARDACSARKYWHFIKLMGRSASHIALECALKTQPNVCLISEEVAAQSLTLAQIVQSLCDTIATRAQHGEHFGIVLVPEGLIEFIPEMKALITELNEVMARRAQEFEALDTPDAQRVWIEQALSASARAVFNALPAEISTQLLADRDPHGNVQVSRIDTERLLILQVTERLAQMKQEGTYTGVFSSIAHFFGYEGRCAFPSNFDADYCYTLGLTACLLAVHRFTGYVASVRNLTSSVAEWAVGGVPLTMLMNMERRHGSQKPVIKKALVDLEGMPFRVFSRRRASWALKTSYVYPGAVQYYGPPAVCDEPSVTIRLERPAPAANSSFGHRSS</sequence>
<keyword id="KW-0963">Cytoplasm</keyword>
<keyword id="KW-0324">Glycolysis</keyword>
<keyword id="KW-0418">Kinase</keyword>
<keyword id="KW-0460">Magnesium</keyword>
<keyword id="KW-0479">Metal-binding</keyword>
<keyword id="KW-1185">Reference proteome</keyword>
<keyword id="KW-0808">Transferase</keyword>